<protein>
    <recommendedName>
        <fullName evidence="1">UDP-N-acetylmuramate--L-alanine ligase</fullName>
        <ecNumber evidence="1">6.3.2.8</ecNumber>
    </recommendedName>
    <alternativeName>
        <fullName evidence="1">UDP-N-acetylmuramoyl-L-alanine synthetase</fullName>
    </alternativeName>
</protein>
<comment type="function">
    <text evidence="1">Cell wall formation.</text>
</comment>
<comment type="catalytic activity">
    <reaction evidence="1">
        <text>UDP-N-acetyl-alpha-D-muramate + L-alanine + ATP = UDP-N-acetyl-alpha-D-muramoyl-L-alanine + ADP + phosphate + H(+)</text>
        <dbReference type="Rhea" id="RHEA:23372"/>
        <dbReference type="ChEBI" id="CHEBI:15378"/>
        <dbReference type="ChEBI" id="CHEBI:30616"/>
        <dbReference type="ChEBI" id="CHEBI:43474"/>
        <dbReference type="ChEBI" id="CHEBI:57972"/>
        <dbReference type="ChEBI" id="CHEBI:70757"/>
        <dbReference type="ChEBI" id="CHEBI:83898"/>
        <dbReference type="ChEBI" id="CHEBI:456216"/>
        <dbReference type="EC" id="6.3.2.8"/>
    </reaction>
</comment>
<comment type="pathway">
    <text evidence="1">Cell wall biogenesis; peptidoglycan biosynthesis.</text>
</comment>
<comment type="subcellular location">
    <subcellularLocation>
        <location evidence="1">Cytoplasm</location>
    </subcellularLocation>
</comment>
<comment type="similarity">
    <text evidence="1">Belongs to the MurCDEF family.</text>
</comment>
<evidence type="ECO:0000255" key="1">
    <source>
        <dbReference type="HAMAP-Rule" id="MF_00046"/>
    </source>
</evidence>
<gene>
    <name evidence="1" type="primary">murC</name>
    <name type="ordered locus">FTW_1852</name>
</gene>
<dbReference type="EC" id="6.3.2.8" evidence="1"/>
<dbReference type="EMBL" id="CP000608">
    <property type="protein sequence ID" value="ABO47512.1"/>
    <property type="molecule type" value="Genomic_DNA"/>
</dbReference>
<dbReference type="RefSeq" id="WP_003028489.1">
    <property type="nucleotide sequence ID" value="NC_009257.1"/>
</dbReference>
<dbReference type="SMR" id="A4J011"/>
<dbReference type="KEGG" id="ftw:FTW_1852"/>
<dbReference type="HOGENOM" id="CLU_028104_2_2_6"/>
<dbReference type="UniPathway" id="UPA00219"/>
<dbReference type="GO" id="GO:0005737">
    <property type="term" value="C:cytoplasm"/>
    <property type="evidence" value="ECO:0007669"/>
    <property type="project" value="UniProtKB-SubCell"/>
</dbReference>
<dbReference type="GO" id="GO:0005524">
    <property type="term" value="F:ATP binding"/>
    <property type="evidence" value="ECO:0007669"/>
    <property type="project" value="UniProtKB-UniRule"/>
</dbReference>
<dbReference type="GO" id="GO:0008763">
    <property type="term" value="F:UDP-N-acetylmuramate-L-alanine ligase activity"/>
    <property type="evidence" value="ECO:0007669"/>
    <property type="project" value="UniProtKB-UniRule"/>
</dbReference>
<dbReference type="GO" id="GO:0051301">
    <property type="term" value="P:cell division"/>
    <property type="evidence" value="ECO:0007669"/>
    <property type="project" value="UniProtKB-KW"/>
</dbReference>
<dbReference type="GO" id="GO:0071555">
    <property type="term" value="P:cell wall organization"/>
    <property type="evidence" value="ECO:0007669"/>
    <property type="project" value="UniProtKB-KW"/>
</dbReference>
<dbReference type="GO" id="GO:0009252">
    <property type="term" value="P:peptidoglycan biosynthetic process"/>
    <property type="evidence" value="ECO:0007669"/>
    <property type="project" value="UniProtKB-UniRule"/>
</dbReference>
<dbReference type="GO" id="GO:0008360">
    <property type="term" value="P:regulation of cell shape"/>
    <property type="evidence" value="ECO:0007669"/>
    <property type="project" value="UniProtKB-KW"/>
</dbReference>
<dbReference type="Gene3D" id="3.90.190.20">
    <property type="entry name" value="Mur ligase, C-terminal domain"/>
    <property type="match status" value="1"/>
</dbReference>
<dbReference type="Gene3D" id="3.40.1190.10">
    <property type="entry name" value="Mur-like, catalytic domain"/>
    <property type="match status" value="1"/>
</dbReference>
<dbReference type="Gene3D" id="3.40.50.720">
    <property type="entry name" value="NAD(P)-binding Rossmann-like Domain"/>
    <property type="match status" value="1"/>
</dbReference>
<dbReference type="HAMAP" id="MF_00046">
    <property type="entry name" value="MurC"/>
    <property type="match status" value="1"/>
</dbReference>
<dbReference type="InterPro" id="IPR036565">
    <property type="entry name" value="Mur-like_cat_sf"/>
</dbReference>
<dbReference type="InterPro" id="IPR004101">
    <property type="entry name" value="Mur_ligase_C"/>
</dbReference>
<dbReference type="InterPro" id="IPR036615">
    <property type="entry name" value="Mur_ligase_C_dom_sf"/>
</dbReference>
<dbReference type="InterPro" id="IPR013221">
    <property type="entry name" value="Mur_ligase_cen"/>
</dbReference>
<dbReference type="InterPro" id="IPR000713">
    <property type="entry name" value="Mur_ligase_N"/>
</dbReference>
<dbReference type="InterPro" id="IPR050061">
    <property type="entry name" value="MurCDEF_pg_biosynth"/>
</dbReference>
<dbReference type="InterPro" id="IPR005758">
    <property type="entry name" value="UDP-N-AcMur_Ala_ligase_MurC"/>
</dbReference>
<dbReference type="NCBIfam" id="TIGR01082">
    <property type="entry name" value="murC"/>
    <property type="match status" value="1"/>
</dbReference>
<dbReference type="PANTHER" id="PTHR43445:SF3">
    <property type="entry name" value="UDP-N-ACETYLMURAMATE--L-ALANINE LIGASE"/>
    <property type="match status" value="1"/>
</dbReference>
<dbReference type="PANTHER" id="PTHR43445">
    <property type="entry name" value="UDP-N-ACETYLMURAMATE--L-ALANINE LIGASE-RELATED"/>
    <property type="match status" value="1"/>
</dbReference>
<dbReference type="Pfam" id="PF01225">
    <property type="entry name" value="Mur_ligase"/>
    <property type="match status" value="1"/>
</dbReference>
<dbReference type="Pfam" id="PF02875">
    <property type="entry name" value="Mur_ligase_C"/>
    <property type="match status" value="1"/>
</dbReference>
<dbReference type="Pfam" id="PF08245">
    <property type="entry name" value="Mur_ligase_M"/>
    <property type="match status" value="1"/>
</dbReference>
<dbReference type="SUPFAM" id="SSF51984">
    <property type="entry name" value="MurCD N-terminal domain"/>
    <property type="match status" value="1"/>
</dbReference>
<dbReference type="SUPFAM" id="SSF53623">
    <property type="entry name" value="MurD-like peptide ligases, catalytic domain"/>
    <property type="match status" value="1"/>
</dbReference>
<dbReference type="SUPFAM" id="SSF53244">
    <property type="entry name" value="MurD-like peptide ligases, peptide-binding domain"/>
    <property type="match status" value="1"/>
</dbReference>
<name>MURC_FRATW</name>
<sequence length="451" mass="49746">MNKKILFLGVGGIGVSALAIAAKRLGAHVAGYDSVANKLTAKLEALGIVIFTSPNGVDVANFDIVVYSSAILSSHPLLSQARSLGIQCLQRAMFLAVLMKDFSYSIAITGTHGKTTTSSVLATLLCQLDKYSSFIVGGVVKYADSNIQVNGTDKLVIEADESDASFLFLSPQVVIITNIDLDHMATYNNSYQTLLENFTDFVSKESVKSIYLCVDDQGCRDLLAKYNQSDKNVTSYGFSINADVQIYDYHIIDEITHFKIRYKGDDLSFKLQLPGRYNVQNATACIIACLDLGFKYEDIRNALIKVTGVARRFDLYTKVISGHQVTVIDDYGHHPVEVANSISAVRDRYPNKKIIHVFQPHRYTRNRDLIKDWPKALSLADQLILLPTYSADEQIIKGAESQDIVKGLSGYLLADGFDHAIYFLEKLANENTVILIQGAGDVTNLVEILSE</sequence>
<proteinExistence type="inferred from homology"/>
<reference key="1">
    <citation type="journal article" date="2007" name="PLoS ONE">
        <title>Complete genomic characterization of a pathogenic A.II strain of Francisella tularensis subspecies tularensis.</title>
        <authorList>
            <person name="Beckstrom-Sternberg S.M."/>
            <person name="Auerbach R.K."/>
            <person name="Godbole S."/>
            <person name="Pearson J.V."/>
            <person name="Beckstrom-Sternberg J.S."/>
            <person name="Deng Z."/>
            <person name="Munk C."/>
            <person name="Kubota K."/>
            <person name="Zhou Y."/>
            <person name="Bruce D."/>
            <person name="Noronha J."/>
            <person name="Scheuermann R.H."/>
            <person name="Wang A."/>
            <person name="Wei X."/>
            <person name="Wang J."/>
            <person name="Hao J."/>
            <person name="Wagner D.M."/>
            <person name="Brettin T.S."/>
            <person name="Brown N."/>
            <person name="Gilna P."/>
            <person name="Keim P.S."/>
        </authorList>
    </citation>
    <scope>NUCLEOTIDE SEQUENCE [LARGE SCALE GENOMIC DNA]</scope>
    <source>
        <strain>WY96-3418</strain>
    </source>
</reference>
<accession>A4J011</accession>
<keyword id="KW-0067">ATP-binding</keyword>
<keyword id="KW-0131">Cell cycle</keyword>
<keyword id="KW-0132">Cell division</keyword>
<keyword id="KW-0133">Cell shape</keyword>
<keyword id="KW-0961">Cell wall biogenesis/degradation</keyword>
<keyword id="KW-0963">Cytoplasm</keyword>
<keyword id="KW-0436">Ligase</keyword>
<keyword id="KW-0547">Nucleotide-binding</keyword>
<keyword id="KW-0573">Peptidoglycan synthesis</keyword>
<organism>
    <name type="scientific">Francisella tularensis subsp. tularensis (strain WY96-3418)</name>
    <dbReference type="NCBI Taxonomy" id="418136"/>
    <lineage>
        <taxon>Bacteria</taxon>
        <taxon>Pseudomonadati</taxon>
        <taxon>Pseudomonadota</taxon>
        <taxon>Gammaproteobacteria</taxon>
        <taxon>Thiotrichales</taxon>
        <taxon>Francisellaceae</taxon>
        <taxon>Francisella</taxon>
    </lineage>
</organism>
<feature type="chain" id="PRO_1000004346" description="UDP-N-acetylmuramate--L-alanine ligase">
    <location>
        <begin position="1"/>
        <end position="451"/>
    </location>
</feature>
<feature type="binding site" evidence="1">
    <location>
        <begin position="110"/>
        <end position="116"/>
    </location>
    <ligand>
        <name>ATP</name>
        <dbReference type="ChEBI" id="CHEBI:30616"/>
    </ligand>
</feature>